<keyword id="KW-1185">Reference proteome</keyword>
<keyword id="KW-0687">Ribonucleoprotein</keyword>
<keyword id="KW-0689">Ribosomal protein</keyword>
<keyword id="KW-0694">RNA-binding</keyword>
<keyword id="KW-0699">rRNA-binding</keyword>
<proteinExistence type="inferred from homology"/>
<accession>Q2YAZ4</accession>
<dbReference type="EMBL" id="CP000103">
    <property type="protein sequence ID" value="ABB74077.1"/>
    <property type="molecule type" value="Genomic_DNA"/>
</dbReference>
<dbReference type="RefSeq" id="WP_011380126.1">
    <property type="nucleotide sequence ID" value="NC_007614.1"/>
</dbReference>
<dbReference type="SMR" id="Q2YAZ4"/>
<dbReference type="STRING" id="323848.Nmul_A0770"/>
<dbReference type="KEGG" id="nmu:Nmul_A0770"/>
<dbReference type="eggNOG" id="COG0090">
    <property type="taxonomic scope" value="Bacteria"/>
</dbReference>
<dbReference type="HOGENOM" id="CLU_036235_2_1_4"/>
<dbReference type="OrthoDB" id="9778722at2"/>
<dbReference type="Proteomes" id="UP000002718">
    <property type="component" value="Chromosome"/>
</dbReference>
<dbReference type="GO" id="GO:0015934">
    <property type="term" value="C:large ribosomal subunit"/>
    <property type="evidence" value="ECO:0007669"/>
    <property type="project" value="InterPro"/>
</dbReference>
<dbReference type="GO" id="GO:0019843">
    <property type="term" value="F:rRNA binding"/>
    <property type="evidence" value="ECO:0007669"/>
    <property type="project" value="UniProtKB-UniRule"/>
</dbReference>
<dbReference type="GO" id="GO:0003735">
    <property type="term" value="F:structural constituent of ribosome"/>
    <property type="evidence" value="ECO:0007669"/>
    <property type="project" value="InterPro"/>
</dbReference>
<dbReference type="GO" id="GO:0016740">
    <property type="term" value="F:transferase activity"/>
    <property type="evidence" value="ECO:0007669"/>
    <property type="project" value="InterPro"/>
</dbReference>
<dbReference type="GO" id="GO:0002181">
    <property type="term" value="P:cytoplasmic translation"/>
    <property type="evidence" value="ECO:0007669"/>
    <property type="project" value="TreeGrafter"/>
</dbReference>
<dbReference type="FunFam" id="2.30.30.30:FF:000001">
    <property type="entry name" value="50S ribosomal protein L2"/>
    <property type="match status" value="1"/>
</dbReference>
<dbReference type="FunFam" id="2.40.50.140:FF:000003">
    <property type="entry name" value="50S ribosomal protein L2"/>
    <property type="match status" value="1"/>
</dbReference>
<dbReference type="FunFam" id="4.10.950.10:FF:000001">
    <property type="entry name" value="50S ribosomal protein L2"/>
    <property type="match status" value="1"/>
</dbReference>
<dbReference type="Gene3D" id="2.30.30.30">
    <property type="match status" value="1"/>
</dbReference>
<dbReference type="Gene3D" id="2.40.50.140">
    <property type="entry name" value="Nucleic acid-binding proteins"/>
    <property type="match status" value="1"/>
</dbReference>
<dbReference type="Gene3D" id="4.10.950.10">
    <property type="entry name" value="Ribosomal protein L2, domain 3"/>
    <property type="match status" value="1"/>
</dbReference>
<dbReference type="HAMAP" id="MF_01320_B">
    <property type="entry name" value="Ribosomal_uL2_B"/>
    <property type="match status" value="1"/>
</dbReference>
<dbReference type="InterPro" id="IPR012340">
    <property type="entry name" value="NA-bd_OB-fold"/>
</dbReference>
<dbReference type="InterPro" id="IPR014722">
    <property type="entry name" value="Rib_uL2_dom2"/>
</dbReference>
<dbReference type="InterPro" id="IPR002171">
    <property type="entry name" value="Ribosomal_uL2"/>
</dbReference>
<dbReference type="InterPro" id="IPR005880">
    <property type="entry name" value="Ribosomal_uL2_bac/org-type"/>
</dbReference>
<dbReference type="InterPro" id="IPR022669">
    <property type="entry name" value="Ribosomal_uL2_C"/>
</dbReference>
<dbReference type="InterPro" id="IPR022671">
    <property type="entry name" value="Ribosomal_uL2_CS"/>
</dbReference>
<dbReference type="InterPro" id="IPR014726">
    <property type="entry name" value="Ribosomal_uL2_dom3"/>
</dbReference>
<dbReference type="InterPro" id="IPR022666">
    <property type="entry name" value="Ribosomal_uL2_RNA-bd_dom"/>
</dbReference>
<dbReference type="InterPro" id="IPR008991">
    <property type="entry name" value="Translation_prot_SH3-like_sf"/>
</dbReference>
<dbReference type="NCBIfam" id="TIGR01171">
    <property type="entry name" value="rplB_bact"/>
    <property type="match status" value="1"/>
</dbReference>
<dbReference type="PANTHER" id="PTHR13691:SF5">
    <property type="entry name" value="LARGE RIBOSOMAL SUBUNIT PROTEIN UL2M"/>
    <property type="match status" value="1"/>
</dbReference>
<dbReference type="PANTHER" id="PTHR13691">
    <property type="entry name" value="RIBOSOMAL PROTEIN L2"/>
    <property type="match status" value="1"/>
</dbReference>
<dbReference type="Pfam" id="PF00181">
    <property type="entry name" value="Ribosomal_L2"/>
    <property type="match status" value="1"/>
</dbReference>
<dbReference type="Pfam" id="PF03947">
    <property type="entry name" value="Ribosomal_L2_C"/>
    <property type="match status" value="1"/>
</dbReference>
<dbReference type="PIRSF" id="PIRSF002158">
    <property type="entry name" value="Ribosomal_L2"/>
    <property type="match status" value="1"/>
</dbReference>
<dbReference type="SMART" id="SM01383">
    <property type="entry name" value="Ribosomal_L2"/>
    <property type="match status" value="1"/>
</dbReference>
<dbReference type="SMART" id="SM01382">
    <property type="entry name" value="Ribosomal_L2_C"/>
    <property type="match status" value="1"/>
</dbReference>
<dbReference type="SUPFAM" id="SSF50249">
    <property type="entry name" value="Nucleic acid-binding proteins"/>
    <property type="match status" value="1"/>
</dbReference>
<dbReference type="SUPFAM" id="SSF50104">
    <property type="entry name" value="Translation proteins SH3-like domain"/>
    <property type="match status" value="1"/>
</dbReference>
<dbReference type="PROSITE" id="PS00467">
    <property type="entry name" value="RIBOSOMAL_L2"/>
    <property type="match status" value="1"/>
</dbReference>
<organism>
    <name type="scientific">Nitrosospira multiformis (strain ATCC 25196 / NCIMB 11849 / C 71)</name>
    <dbReference type="NCBI Taxonomy" id="323848"/>
    <lineage>
        <taxon>Bacteria</taxon>
        <taxon>Pseudomonadati</taxon>
        <taxon>Pseudomonadota</taxon>
        <taxon>Betaproteobacteria</taxon>
        <taxon>Nitrosomonadales</taxon>
        <taxon>Nitrosomonadaceae</taxon>
        <taxon>Nitrosospira</taxon>
    </lineage>
</organism>
<protein>
    <recommendedName>
        <fullName evidence="1">Large ribosomal subunit protein uL2</fullName>
    </recommendedName>
    <alternativeName>
        <fullName evidence="3">50S ribosomal protein L2</fullName>
    </alternativeName>
</protein>
<feature type="chain" id="PRO_0000237217" description="Large ribosomal subunit protein uL2">
    <location>
        <begin position="1"/>
        <end position="277"/>
    </location>
</feature>
<feature type="region of interest" description="Disordered" evidence="2">
    <location>
        <begin position="225"/>
        <end position="277"/>
    </location>
</feature>
<name>RL2_NITMU</name>
<sequence length="277" mass="30227">MALVKVKPTSPGRRAVVKVVNAGLHKGAPYPHLVEKQNRTAGRNNKGQITTRHIGGGHKQHYRIVDFRRNKDGIAARVERLEYDPNRSANLALLCYSDGERRYVIAPKGIVPGMQLMSGADAPIKNGNALPLRNIPVGSIIHCVEMMPGKGAQLARSAGASVQLLAREGDYAQLRLRSGEIRRVHVNCRATIGEVGNEEHNLRAIGKAGAQRWRGIRPTVRGVAMNPIDHPHGGGEGKTAAGRHPVSPWGTPSKGFRTRVNKRTDGMIVRRRYSNKG</sequence>
<evidence type="ECO:0000255" key="1">
    <source>
        <dbReference type="HAMAP-Rule" id="MF_01320"/>
    </source>
</evidence>
<evidence type="ECO:0000256" key="2">
    <source>
        <dbReference type="SAM" id="MobiDB-lite"/>
    </source>
</evidence>
<evidence type="ECO:0000305" key="3"/>
<reference key="1">
    <citation type="submission" date="2005-08" db="EMBL/GenBank/DDBJ databases">
        <title>Complete sequence of chromosome 1 of Nitrosospira multiformis ATCC 25196.</title>
        <authorList>
            <person name="Copeland A."/>
            <person name="Lucas S."/>
            <person name="Lapidus A."/>
            <person name="Barry K."/>
            <person name="Detter J.C."/>
            <person name="Glavina T."/>
            <person name="Hammon N."/>
            <person name="Israni S."/>
            <person name="Pitluck S."/>
            <person name="Chain P."/>
            <person name="Malfatti S."/>
            <person name="Shin M."/>
            <person name="Vergez L."/>
            <person name="Schmutz J."/>
            <person name="Larimer F."/>
            <person name="Land M."/>
            <person name="Hauser L."/>
            <person name="Kyrpides N."/>
            <person name="Lykidis A."/>
            <person name="Richardson P."/>
        </authorList>
    </citation>
    <scope>NUCLEOTIDE SEQUENCE [LARGE SCALE GENOMIC DNA]</scope>
    <source>
        <strain>ATCC 25196 / NCIMB 11849 / C 71</strain>
    </source>
</reference>
<gene>
    <name evidence="1" type="primary">rplB</name>
    <name type="ordered locus">Nmul_A0770</name>
</gene>
<comment type="function">
    <text evidence="1">One of the primary rRNA binding proteins. Required for association of the 30S and 50S subunits to form the 70S ribosome, for tRNA binding and peptide bond formation. It has been suggested to have peptidyltransferase activity; this is somewhat controversial. Makes several contacts with the 16S rRNA in the 70S ribosome.</text>
</comment>
<comment type="subunit">
    <text evidence="1">Part of the 50S ribosomal subunit. Forms a bridge to the 30S subunit in the 70S ribosome.</text>
</comment>
<comment type="similarity">
    <text evidence="1">Belongs to the universal ribosomal protein uL2 family.</text>
</comment>